<protein>
    <recommendedName>
        <fullName evidence="1">Fatty acid oxidation complex subunit alpha</fullName>
    </recommendedName>
    <domain>
        <recommendedName>
            <fullName evidence="1">Enoyl-CoA hydratase/3-hydroxybutyryl-CoA epimerase</fullName>
            <ecNumber evidence="1">4.2.1.17</ecNumber>
            <ecNumber evidence="1">5.1.2.3</ecNumber>
        </recommendedName>
    </domain>
    <domain>
        <recommendedName>
            <fullName evidence="1">3-hydroxyacyl-CoA dehydrogenase</fullName>
            <ecNumber evidence="1">1.1.1.35</ecNumber>
        </recommendedName>
    </domain>
</protein>
<gene>
    <name evidence="1" type="primary">fadJ</name>
    <name type="ordered locus">ECSE_2650</name>
</gene>
<sequence>MEMASVFTLNVRLDNIAIITIDVPGEKMNTLKAEFASQVRAIIKQLRENKELRGVVFVSAKPDNFIAGADINMIGNCKTAQEAEALARQGQQLMAEIHALPIPVIAAIHGACLGGGLELALACHGRVCTDDPKTVLGLPEVQLGLLPGSGGTQRLPRLIGVSTALEMILTGKQLRAKQALKLGLVDDVVPHSILLEVAVELAKKDRPSSRPLPVRERILAGPLGRALLFKMVGKKTEHKTQGNYPATERILEVVETGLAQGTSSGYDAEARAFGELAMTPQSQALRSIFFASTDVKKDPGSDAPPAPLNSVGILGGGLMGGGIAYVTACKAGLPVRIKDINPQGINHALKYSWDQLEGKVRRRHLKASERDKQLALISGTTDYRGFAHRDLIIEAVFENLELKQQMVAEVEQNCAAHTIFASNTSSLPIGDIAAHATRPEQVIGLHFFSPVEKMPLVEIIPHAGTSAQTIATTVKLAKKQGKTPIVVRDKAGFYVNRILAPYINEAIRMLTEGERVEHIDAALVKFGFPVGPIQLLDEVGIDTGTKIIPVLEAAYGERFSAPANVVSSILNDDRKGRKNGRGFYLYGQKGRKSKKQVDPAIYPLIGAQGQGRLSAPQVAERCVMLMLNEAVRCVDEQVIRSVRDGDIGAVFGIGFPPFLGGPFRYIDSLGAGEVVAIMQRLATQYGSRFTPCERLVEMGARGESFWKTTATDLQ</sequence>
<dbReference type="EC" id="4.2.1.17" evidence="1"/>
<dbReference type="EC" id="5.1.2.3" evidence="1"/>
<dbReference type="EC" id="1.1.1.35" evidence="1"/>
<dbReference type="EMBL" id="AP009240">
    <property type="protein sequence ID" value="BAG78174.1"/>
    <property type="molecule type" value="Genomic_DNA"/>
</dbReference>
<dbReference type="RefSeq" id="WP_000425057.1">
    <property type="nucleotide sequence ID" value="NC_011415.1"/>
</dbReference>
<dbReference type="SMR" id="B6I6Q4"/>
<dbReference type="KEGG" id="ecy:ECSE_2650"/>
<dbReference type="HOGENOM" id="CLU_009834_16_1_6"/>
<dbReference type="UniPathway" id="UPA00659"/>
<dbReference type="Proteomes" id="UP000008199">
    <property type="component" value="Chromosome"/>
</dbReference>
<dbReference type="GO" id="GO:0005737">
    <property type="term" value="C:cytoplasm"/>
    <property type="evidence" value="ECO:0007669"/>
    <property type="project" value="UniProtKB-SubCell"/>
</dbReference>
<dbReference type="GO" id="GO:0008692">
    <property type="term" value="F:3-hydroxybutyryl-CoA epimerase activity"/>
    <property type="evidence" value="ECO:0007669"/>
    <property type="project" value="UniProtKB-UniRule"/>
</dbReference>
<dbReference type="GO" id="GO:0004300">
    <property type="term" value="F:enoyl-CoA hydratase activity"/>
    <property type="evidence" value="ECO:0007669"/>
    <property type="project" value="UniProtKB-UniRule"/>
</dbReference>
<dbReference type="GO" id="GO:0016509">
    <property type="term" value="F:long-chain-3-hydroxyacyl-CoA dehydrogenase activity"/>
    <property type="evidence" value="ECO:0007669"/>
    <property type="project" value="TreeGrafter"/>
</dbReference>
<dbReference type="GO" id="GO:0070403">
    <property type="term" value="F:NAD+ binding"/>
    <property type="evidence" value="ECO:0007669"/>
    <property type="project" value="InterPro"/>
</dbReference>
<dbReference type="GO" id="GO:0006635">
    <property type="term" value="P:fatty acid beta-oxidation"/>
    <property type="evidence" value="ECO:0007669"/>
    <property type="project" value="UniProtKB-UniRule"/>
</dbReference>
<dbReference type="CDD" id="cd06558">
    <property type="entry name" value="crotonase-like"/>
    <property type="match status" value="1"/>
</dbReference>
<dbReference type="FunFam" id="1.10.1040.50:FF:000003">
    <property type="entry name" value="Fatty acid oxidation complex subunit alpha"/>
    <property type="match status" value="1"/>
</dbReference>
<dbReference type="FunFam" id="3.90.226.10:FF:000011">
    <property type="entry name" value="Fatty acid oxidation complex subunit alpha"/>
    <property type="match status" value="1"/>
</dbReference>
<dbReference type="FunFam" id="3.40.50.720:FF:000009">
    <property type="entry name" value="Fatty oxidation complex, alpha subunit"/>
    <property type="match status" value="1"/>
</dbReference>
<dbReference type="Gene3D" id="1.10.1040.50">
    <property type="match status" value="1"/>
</dbReference>
<dbReference type="Gene3D" id="3.90.226.10">
    <property type="entry name" value="2-enoyl-CoA Hydratase, Chain A, domain 1"/>
    <property type="match status" value="1"/>
</dbReference>
<dbReference type="Gene3D" id="3.40.50.720">
    <property type="entry name" value="NAD(P)-binding Rossmann-like Domain"/>
    <property type="match status" value="1"/>
</dbReference>
<dbReference type="HAMAP" id="MF_01617">
    <property type="entry name" value="FadJ"/>
    <property type="match status" value="1"/>
</dbReference>
<dbReference type="InterPro" id="IPR006180">
    <property type="entry name" value="3-OHacyl-CoA_DH_CS"/>
</dbReference>
<dbReference type="InterPro" id="IPR006176">
    <property type="entry name" value="3-OHacyl-CoA_DH_NAD-bd"/>
</dbReference>
<dbReference type="InterPro" id="IPR006108">
    <property type="entry name" value="3HC_DH_C"/>
</dbReference>
<dbReference type="InterPro" id="IPR008927">
    <property type="entry name" value="6-PGluconate_DH-like_C_sf"/>
</dbReference>
<dbReference type="InterPro" id="IPR029045">
    <property type="entry name" value="ClpP/crotonase-like_dom_sf"/>
</dbReference>
<dbReference type="InterPro" id="IPR001753">
    <property type="entry name" value="Enoyl-CoA_hydra/iso"/>
</dbReference>
<dbReference type="InterPro" id="IPR050136">
    <property type="entry name" value="FA_oxidation_alpha_subunit"/>
</dbReference>
<dbReference type="InterPro" id="IPR012802">
    <property type="entry name" value="FadJ"/>
</dbReference>
<dbReference type="InterPro" id="IPR036291">
    <property type="entry name" value="NAD(P)-bd_dom_sf"/>
</dbReference>
<dbReference type="NCBIfam" id="TIGR02440">
    <property type="entry name" value="FadJ"/>
    <property type="match status" value="1"/>
</dbReference>
<dbReference type="NCBIfam" id="NF008363">
    <property type="entry name" value="PRK11154.1"/>
    <property type="match status" value="1"/>
</dbReference>
<dbReference type="PANTHER" id="PTHR43612">
    <property type="entry name" value="TRIFUNCTIONAL ENZYME SUBUNIT ALPHA"/>
    <property type="match status" value="1"/>
</dbReference>
<dbReference type="PANTHER" id="PTHR43612:SF3">
    <property type="entry name" value="TRIFUNCTIONAL ENZYME SUBUNIT ALPHA, MITOCHONDRIAL"/>
    <property type="match status" value="1"/>
</dbReference>
<dbReference type="Pfam" id="PF00725">
    <property type="entry name" value="3HCDH"/>
    <property type="match status" value="2"/>
</dbReference>
<dbReference type="Pfam" id="PF02737">
    <property type="entry name" value="3HCDH_N"/>
    <property type="match status" value="1"/>
</dbReference>
<dbReference type="Pfam" id="PF00378">
    <property type="entry name" value="ECH_1"/>
    <property type="match status" value="1"/>
</dbReference>
<dbReference type="SUPFAM" id="SSF48179">
    <property type="entry name" value="6-phosphogluconate dehydrogenase C-terminal domain-like"/>
    <property type="match status" value="2"/>
</dbReference>
<dbReference type="SUPFAM" id="SSF52096">
    <property type="entry name" value="ClpP/crotonase"/>
    <property type="match status" value="1"/>
</dbReference>
<dbReference type="SUPFAM" id="SSF51735">
    <property type="entry name" value="NAD(P)-binding Rossmann-fold domains"/>
    <property type="match status" value="1"/>
</dbReference>
<dbReference type="PROSITE" id="PS00067">
    <property type="entry name" value="3HCDH"/>
    <property type="match status" value="1"/>
</dbReference>
<comment type="function">
    <text evidence="1">Catalyzes the formation of a hydroxyacyl-CoA by addition of water on enoyl-CoA. Also exhibits 3-hydroxyacyl-CoA epimerase and 3-hydroxyacyl-CoA dehydrogenase activities.</text>
</comment>
<comment type="catalytic activity">
    <reaction evidence="1">
        <text>a (3S)-3-hydroxyacyl-CoA = a (2E)-enoyl-CoA + H2O</text>
        <dbReference type="Rhea" id="RHEA:16105"/>
        <dbReference type="ChEBI" id="CHEBI:15377"/>
        <dbReference type="ChEBI" id="CHEBI:57318"/>
        <dbReference type="ChEBI" id="CHEBI:58856"/>
        <dbReference type="EC" id="4.2.1.17"/>
    </reaction>
</comment>
<comment type="catalytic activity">
    <reaction evidence="1">
        <text>a 4-saturated-(3S)-3-hydroxyacyl-CoA = a (3E)-enoyl-CoA + H2O</text>
        <dbReference type="Rhea" id="RHEA:20724"/>
        <dbReference type="ChEBI" id="CHEBI:15377"/>
        <dbReference type="ChEBI" id="CHEBI:58521"/>
        <dbReference type="ChEBI" id="CHEBI:137480"/>
        <dbReference type="EC" id="4.2.1.17"/>
    </reaction>
</comment>
<comment type="catalytic activity">
    <reaction evidence="1">
        <text>a (3S)-3-hydroxyacyl-CoA + NAD(+) = a 3-oxoacyl-CoA + NADH + H(+)</text>
        <dbReference type="Rhea" id="RHEA:22432"/>
        <dbReference type="ChEBI" id="CHEBI:15378"/>
        <dbReference type="ChEBI" id="CHEBI:57318"/>
        <dbReference type="ChEBI" id="CHEBI:57540"/>
        <dbReference type="ChEBI" id="CHEBI:57945"/>
        <dbReference type="ChEBI" id="CHEBI:90726"/>
        <dbReference type="EC" id="1.1.1.35"/>
    </reaction>
</comment>
<comment type="catalytic activity">
    <reaction evidence="1">
        <text>(3S)-3-hydroxybutanoyl-CoA = (3R)-3-hydroxybutanoyl-CoA</text>
        <dbReference type="Rhea" id="RHEA:21760"/>
        <dbReference type="ChEBI" id="CHEBI:57315"/>
        <dbReference type="ChEBI" id="CHEBI:57316"/>
        <dbReference type="EC" id="5.1.2.3"/>
    </reaction>
</comment>
<comment type="pathway">
    <text evidence="1">Lipid metabolism; fatty acid beta-oxidation.</text>
</comment>
<comment type="subunit">
    <text evidence="1">Heterotetramer of two alpha chains (FadJ) and two beta chains (FadI).</text>
</comment>
<comment type="subcellular location">
    <subcellularLocation>
        <location evidence="1">Cytoplasm</location>
    </subcellularLocation>
</comment>
<comment type="similarity">
    <text evidence="1">In the N-terminal section; belongs to the enoyl-CoA hydratase/isomerase family.</text>
</comment>
<comment type="similarity">
    <text evidence="1">In the central section; belongs to the 3-hydroxyacyl-CoA dehydrogenase family.</text>
</comment>
<proteinExistence type="inferred from homology"/>
<name>FADJ_ECOSE</name>
<accession>B6I6Q4</accession>
<reference key="1">
    <citation type="journal article" date="2008" name="DNA Res.">
        <title>Complete genome sequence and comparative analysis of the wild-type commensal Escherichia coli strain SE11 isolated from a healthy adult.</title>
        <authorList>
            <person name="Oshima K."/>
            <person name="Toh H."/>
            <person name="Ogura Y."/>
            <person name="Sasamoto H."/>
            <person name="Morita H."/>
            <person name="Park S.-H."/>
            <person name="Ooka T."/>
            <person name="Iyoda S."/>
            <person name="Taylor T.D."/>
            <person name="Hayashi T."/>
            <person name="Itoh K."/>
            <person name="Hattori M."/>
        </authorList>
    </citation>
    <scope>NUCLEOTIDE SEQUENCE [LARGE SCALE GENOMIC DNA]</scope>
    <source>
        <strain>SE11</strain>
    </source>
</reference>
<feature type="chain" id="PRO_1000185943" description="Fatty acid oxidation complex subunit alpha">
    <location>
        <begin position="1"/>
        <end position="714"/>
    </location>
</feature>
<feature type="region of interest" description="Enoyl-CoA hydratase" evidence="1">
    <location>
        <begin position="1"/>
        <end position="190"/>
    </location>
</feature>
<feature type="region of interest" description="3-hydroxyacyl-CoA dehydrogenase" evidence="1">
    <location>
        <begin position="306"/>
        <end position="714"/>
    </location>
</feature>
<feature type="site" description="Important for catalytic activity" evidence="1">
    <location>
        <position position="118"/>
    </location>
</feature>
<feature type="site" description="Important for catalytic activity" evidence="1">
    <location>
        <position position="140"/>
    </location>
</feature>
<organism>
    <name type="scientific">Escherichia coli (strain SE11)</name>
    <dbReference type="NCBI Taxonomy" id="409438"/>
    <lineage>
        <taxon>Bacteria</taxon>
        <taxon>Pseudomonadati</taxon>
        <taxon>Pseudomonadota</taxon>
        <taxon>Gammaproteobacteria</taxon>
        <taxon>Enterobacterales</taxon>
        <taxon>Enterobacteriaceae</taxon>
        <taxon>Escherichia</taxon>
    </lineage>
</organism>
<keyword id="KW-0963">Cytoplasm</keyword>
<keyword id="KW-0276">Fatty acid metabolism</keyword>
<keyword id="KW-0413">Isomerase</keyword>
<keyword id="KW-0442">Lipid degradation</keyword>
<keyword id="KW-0443">Lipid metabolism</keyword>
<keyword id="KW-0456">Lyase</keyword>
<keyword id="KW-0511">Multifunctional enzyme</keyword>
<keyword id="KW-0520">NAD</keyword>
<keyword id="KW-0560">Oxidoreductase</keyword>
<evidence type="ECO:0000255" key="1">
    <source>
        <dbReference type="HAMAP-Rule" id="MF_01617"/>
    </source>
</evidence>